<reference key="1">
    <citation type="submission" date="2007-11" db="EMBL/GenBank/DDBJ databases">
        <title>Complete sequence of chromosome of Shewanella baltica OS195.</title>
        <authorList>
            <consortium name="US DOE Joint Genome Institute"/>
            <person name="Copeland A."/>
            <person name="Lucas S."/>
            <person name="Lapidus A."/>
            <person name="Barry K."/>
            <person name="Glavina del Rio T."/>
            <person name="Dalin E."/>
            <person name="Tice H."/>
            <person name="Pitluck S."/>
            <person name="Chain P."/>
            <person name="Malfatti S."/>
            <person name="Shin M."/>
            <person name="Vergez L."/>
            <person name="Schmutz J."/>
            <person name="Larimer F."/>
            <person name="Land M."/>
            <person name="Hauser L."/>
            <person name="Kyrpides N."/>
            <person name="Kim E."/>
            <person name="Brettar I."/>
            <person name="Rodrigues J."/>
            <person name="Konstantinidis K."/>
            <person name="Klappenbach J."/>
            <person name="Hofle M."/>
            <person name="Tiedje J."/>
            <person name="Richardson P."/>
        </authorList>
    </citation>
    <scope>NUCLEOTIDE SEQUENCE [LARGE SCALE GENOMIC DNA]</scope>
    <source>
        <strain>OS195</strain>
    </source>
</reference>
<feature type="chain" id="PRO_1000083293" description="Replication restart protein PriB">
    <location>
        <begin position="1"/>
        <end position="101"/>
    </location>
</feature>
<feature type="domain" description="SSB" evidence="1">
    <location>
        <begin position="1"/>
        <end position="101"/>
    </location>
</feature>
<accession>A9L121</accession>
<keyword id="KW-0235">DNA replication</keyword>
<keyword id="KW-0238">DNA-binding</keyword>
<keyword id="KW-0639">Primosome</keyword>
<comment type="function">
    <text evidence="1">Involved in the restart of stalled replication forks, which reloads the replicative helicase on sites other than the origin of replication; the PriA-PriB pathway is the major replication restart pathway. During primosome assembly it facilitates complex formation between PriA and DnaT on DNA; stabilizes PriA on DNA. Stimulates the DNA unwinding activity of PriA helicase.</text>
</comment>
<comment type="subunit">
    <text evidence="1">Homodimer. Interacts with PriA and DnaT. Component of the replication restart primosome. Primosome assembly occurs via a 'hand-off' mechanism. PriA binds to replication forks, subsequently PriB then DnaT bind; DnaT then displaces ssDNA to generate the helicase loading substrate.</text>
</comment>
<comment type="similarity">
    <text evidence="1">Belongs to the PriB family.</text>
</comment>
<proteinExistence type="inferred from homology"/>
<protein>
    <recommendedName>
        <fullName evidence="1">Replication restart protein PriB</fullName>
    </recommendedName>
</protein>
<dbReference type="EMBL" id="CP000891">
    <property type="protein sequence ID" value="ABX47920.1"/>
    <property type="molecule type" value="Genomic_DNA"/>
</dbReference>
<dbReference type="RefSeq" id="WP_006083043.1">
    <property type="nucleotide sequence ID" value="NC_009997.1"/>
</dbReference>
<dbReference type="SMR" id="A9L121"/>
<dbReference type="GeneID" id="11771053"/>
<dbReference type="KEGG" id="sbn:Sbal195_0742"/>
<dbReference type="HOGENOM" id="CLU_166075_0_0_6"/>
<dbReference type="Proteomes" id="UP000000770">
    <property type="component" value="Chromosome"/>
</dbReference>
<dbReference type="GO" id="GO:1990077">
    <property type="term" value="C:primosome complex"/>
    <property type="evidence" value="ECO:0007669"/>
    <property type="project" value="UniProtKB-KW"/>
</dbReference>
<dbReference type="GO" id="GO:0003697">
    <property type="term" value="F:single-stranded DNA binding"/>
    <property type="evidence" value="ECO:0007669"/>
    <property type="project" value="UniProtKB-UniRule"/>
</dbReference>
<dbReference type="GO" id="GO:0006269">
    <property type="term" value="P:DNA replication, synthesis of primer"/>
    <property type="evidence" value="ECO:0007669"/>
    <property type="project" value="UniProtKB-KW"/>
</dbReference>
<dbReference type="FunFam" id="2.40.50.140:FF:000332">
    <property type="entry name" value="Primosomal replication protein N"/>
    <property type="match status" value="1"/>
</dbReference>
<dbReference type="Gene3D" id="2.40.50.140">
    <property type="entry name" value="Nucleic acid-binding proteins"/>
    <property type="match status" value="1"/>
</dbReference>
<dbReference type="HAMAP" id="MF_00720">
    <property type="entry name" value="PriB"/>
    <property type="match status" value="1"/>
</dbReference>
<dbReference type="InterPro" id="IPR012340">
    <property type="entry name" value="NA-bd_OB-fold"/>
</dbReference>
<dbReference type="InterPro" id="IPR000424">
    <property type="entry name" value="Primosome_PriB/ssb"/>
</dbReference>
<dbReference type="InterPro" id="IPR023646">
    <property type="entry name" value="Prisomal_replication_PriB"/>
</dbReference>
<dbReference type="NCBIfam" id="TIGR04418">
    <property type="entry name" value="PriB_gamma"/>
    <property type="match status" value="1"/>
</dbReference>
<dbReference type="Pfam" id="PF22657">
    <property type="entry name" value="SSB_1"/>
    <property type="match status" value="1"/>
</dbReference>
<dbReference type="PIRSF" id="PIRSF003135">
    <property type="entry name" value="Primosomal_n"/>
    <property type="match status" value="1"/>
</dbReference>
<dbReference type="SUPFAM" id="SSF50249">
    <property type="entry name" value="Nucleic acid-binding proteins"/>
    <property type="match status" value="1"/>
</dbReference>
<dbReference type="PROSITE" id="PS50935">
    <property type="entry name" value="SSB"/>
    <property type="match status" value="1"/>
</dbReference>
<sequence>MTTNNLVLSGTITRSRRFKSPAGIAHSVIMLEHKSQRYEADMLRNVYVQIQVILSGPRFESVAEDLKAGVEVQVQGFMTLQQGRNGQNRLVIHAENVELKT</sequence>
<gene>
    <name evidence="1" type="primary">priB</name>
    <name type="ordered locus">Sbal195_0742</name>
</gene>
<evidence type="ECO:0000255" key="1">
    <source>
        <dbReference type="HAMAP-Rule" id="MF_00720"/>
    </source>
</evidence>
<organism>
    <name type="scientific">Shewanella baltica (strain OS195)</name>
    <dbReference type="NCBI Taxonomy" id="399599"/>
    <lineage>
        <taxon>Bacteria</taxon>
        <taxon>Pseudomonadati</taxon>
        <taxon>Pseudomonadota</taxon>
        <taxon>Gammaproteobacteria</taxon>
        <taxon>Alteromonadales</taxon>
        <taxon>Shewanellaceae</taxon>
        <taxon>Shewanella</taxon>
    </lineage>
</organism>
<name>PRIB_SHEB9</name>